<dbReference type="EC" id="2.1.1.198" evidence="1"/>
<dbReference type="EMBL" id="AE004439">
    <property type="protein sequence ID" value="AAK02729.1"/>
    <property type="molecule type" value="Genomic_DNA"/>
</dbReference>
<dbReference type="RefSeq" id="WP_010906773.1">
    <property type="nucleotide sequence ID" value="NC_002663.1"/>
</dbReference>
<dbReference type="SMR" id="Q9CN04"/>
<dbReference type="STRING" id="272843.PM0645"/>
<dbReference type="EnsemblBacteria" id="AAK02729">
    <property type="protein sequence ID" value="AAK02729"/>
    <property type="gene ID" value="PM0645"/>
</dbReference>
<dbReference type="KEGG" id="pmu:PM0645"/>
<dbReference type="PATRIC" id="fig|272843.6.peg.653"/>
<dbReference type="HOGENOM" id="CLU_044779_4_0_6"/>
<dbReference type="OrthoDB" id="9809084at2"/>
<dbReference type="Proteomes" id="UP000000809">
    <property type="component" value="Chromosome"/>
</dbReference>
<dbReference type="GO" id="GO:0005737">
    <property type="term" value="C:cytoplasm"/>
    <property type="evidence" value="ECO:0007669"/>
    <property type="project" value="UniProtKB-SubCell"/>
</dbReference>
<dbReference type="GO" id="GO:0070677">
    <property type="term" value="F:rRNA (cytosine-2'-O-)-methyltransferase activity"/>
    <property type="evidence" value="ECO:0007669"/>
    <property type="project" value="UniProtKB-UniRule"/>
</dbReference>
<dbReference type="CDD" id="cd11648">
    <property type="entry name" value="RsmI"/>
    <property type="match status" value="1"/>
</dbReference>
<dbReference type="FunFam" id="3.30.950.10:FF:000002">
    <property type="entry name" value="Ribosomal RNA small subunit methyltransferase I"/>
    <property type="match status" value="1"/>
</dbReference>
<dbReference type="FunFam" id="3.40.1010.10:FF:000002">
    <property type="entry name" value="Ribosomal RNA small subunit methyltransferase I"/>
    <property type="match status" value="1"/>
</dbReference>
<dbReference type="Gene3D" id="3.40.1010.10">
    <property type="entry name" value="Cobalt-precorrin-4 Transmethylase, Domain 1"/>
    <property type="match status" value="1"/>
</dbReference>
<dbReference type="Gene3D" id="3.30.950.10">
    <property type="entry name" value="Methyltransferase, Cobalt-precorrin-4 Transmethylase, Domain 2"/>
    <property type="match status" value="1"/>
</dbReference>
<dbReference type="HAMAP" id="MF_01877">
    <property type="entry name" value="16SrRNA_methyltr_I"/>
    <property type="match status" value="1"/>
</dbReference>
<dbReference type="InterPro" id="IPR000878">
    <property type="entry name" value="4pyrrol_Mease"/>
</dbReference>
<dbReference type="InterPro" id="IPR035996">
    <property type="entry name" value="4pyrrol_Methylase_sf"/>
</dbReference>
<dbReference type="InterPro" id="IPR014777">
    <property type="entry name" value="4pyrrole_Mease_sub1"/>
</dbReference>
<dbReference type="InterPro" id="IPR014776">
    <property type="entry name" value="4pyrrole_Mease_sub2"/>
</dbReference>
<dbReference type="InterPro" id="IPR008189">
    <property type="entry name" value="rRNA_ssu_MeTfrase_I"/>
</dbReference>
<dbReference type="InterPro" id="IPR053910">
    <property type="entry name" value="RsmI_HTH"/>
</dbReference>
<dbReference type="InterPro" id="IPR018063">
    <property type="entry name" value="SAM_MeTrfase_RsmI_CS"/>
</dbReference>
<dbReference type="NCBIfam" id="TIGR00096">
    <property type="entry name" value="16S rRNA (cytidine(1402)-2'-O)-methyltransferase"/>
    <property type="match status" value="1"/>
</dbReference>
<dbReference type="PANTHER" id="PTHR46111">
    <property type="entry name" value="RIBOSOMAL RNA SMALL SUBUNIT METHYLTRANSFERASE I"/>
    <property type="match status" value="1"/>
</dbReference>
<dbReference type="PANTHER" id="PTHR46111:SF1">
    <property type="entry name" value="RIBOSOMAL RNA SMALL SUBUNIT METHYLTRANSFERASE I"/>
    <property type="match status" value="1"/>
</dbReference>
<dbReference type="Pfam" id="PF23016">
    <property type="entry name" value="RsmI_C"/>
    <property type="match status" value="1"/>
</dbReference>
<dbReference type="Pfam" id="PF00590">
    <property type="entry name" value="TP_methylase"/>
    <property type="match status" value="1"/>
</dbReference>
<dbReference type="PIRSF" id="PIRSF005917">
    <property type="entry name" value="MTase_YraL"/>
    <property type="match status" value="1"/>
</dbReference>
<dbReference type="SUPFAM" id="SSF53790">
    <property type="entry name" value="Tetrapyrrole methylase"/>
    <property type="match status" value="1"/>
</dbReference>
<dbReference type="PROSITE" id="PS01296">
    <property type="entry name" value="RSMI"/>
    <property type="match status" value="1"/>
</dbReference>
<proteinExistence type="inferred from homology"/>
<protein>
    <recommendedName>
        <fullName evidence="1">Ribosomal RNA small subunit methyltransferase I</fullName>
        <ecNumber evidence="1">2.1.1.198</ecNumber>
    </recommendedName>
    <alternativeName>
        <fullName evidence="1">16S rRNA 2'-O-ribose C1402 methyltransferase</fullName>
    </alternativeName>
    <alternativeName>
        <fullName evidence="1">rRNA (cytidine-2'-O-)-methyltransferase RsmI</fullName>
    </alternativeName>
</protein>
<comment type="function">
    <text evidence="1">Catalyzes the 2'-O-methylation of the ribose of cytidine 1402 (C1402) in 16S rRNA.</text>
</comment>
<comment type="catalytic activity">
    <reaction evidence="1">
        <text>cytidine(1402) in 16S rRNA + S-adenosyl-L-methionine = 2'-O-methylcytidine(1402) in 16S rRNA + S-adenosyl-L-homocysteine + H(+)</text>
        <dbReference type="Rhea" id="RHEA:42924"/>
        <dbReference type="Rhea" id="RHEA-COMP:10285"/>
        <dbReference type="Rhea" id="RHEA-COMP:10286"/>
        <dbReference type="ChEBI" id="CHEBI:15378"/>
        <dbReference type="ChEBI" id="CHEBI:57856"/>
        <dbReference type="ChEBI" id="CHEBI:59789"/>
        <dbReference type="ChEBI" id="CHEBI:74495"/>
        <dbReference type="ChEBI" id="CHEBI:82748"/>
        <dbReference type="EC" id="2.1.1.198"/>
    </reaction>
</comment>
<comment type="subcellular location">
    <subcellularLocation>
        <location evidence="1">Cytoplasm</location>
    </subcellularLocation>
</comment>
<comment type="similarity">
    <text evidence="1">Belongs to the methyltransferase superfamily. RsmI family.</text>
</comment>
<organism>
    <name type="scientific">Pasteurella multocida (strain Pm70)</name>
    <dbReference type="NCBI Taxonomy" id="272843"/>
    <lineage>
        <taxon>Bacteria</taxon>
        <taxon>Pseudomonadati</taxon>
        <taxon>Pseudomonadota</taxon>
        <taxon>Gammaproteobacteria</taxon>
        <taxon>Pasteurellales</taxon>
        <taxon>Pasteurellaceae</taxon>
        <taxon>Pasteurella</taxon>
    </lineage>
</organism>
<accession>Q9CN04</accession>
<gene>
    <name evidence="1" type="primary">rsmI</name>
    <name type="ordered locus">PM0645</name>
</gene>
<name>RSMI_PASMU</name>
<keyword id="KW-0963">Cytoplasm</keyword>
<keyword id="KW-0489">Methyltransferase</keyword>
<keyword id="KW-1185">Reference proteome</keyword>
<keyword id="KW-0698">rRNA processing</keyword>
<keyword id="KW-0949">S-adenosyl-L-methionine</keyword>
<keyword id="KW-0808">Transferase</keyword>
<feature type="chain" id="PRO_0000211950" description="Ribosomal RNA small subunit methyltransferase I">
    <location>
        <begin position="1"/>
        <end position="281"/>
    </location>
</feature>
<reference key="1">
    <citation type="journal article" date="2001" name="Proc. Natl. Acad. Sci. U.S.A.">
        <title>Complete genomic sequence of Pasteurella multocida Pm70.</title>
        <authorList>
            <person name="May B.J."/>
            <person name="Zhang Q."/>
            <person name="Li L.L."/>
            <person name="Paustian M.L."/>
            <person name="Whittam T.S."/>
            <person name="Kapur V."/>
        </authorList>
    </citation>
    <scope>NUCLEOTIDE SEQUENCE [LARGE SCALE GENOMIC DNA]</scope>
    <source>
        <strain>Pm70</strain>
    </source>
</reference>
<evidence type="ECO:0000255" key="1">
    <source>
        <dbReference type="HAMAP-Rule" id="MF_01877"/>
    </source>
</evidence>
<sequence length="281" mass="31196">MNNLTGILYIVATPIGNLQDITQRALAIFEQVDLIAAEDTRHSGLLLSHYGIKKPFFALHDHNEQQKAHLLVEKLQQGQHIALISDAGTPLISDPGFHLVRQCRQAGIKVVPIPGACAAVTALCASGIASDRFCFEGFLPAKSKARCDKLQNLAEEERTLIFYESTHRILDTLADIEKTLGAERYVVLAREITKTWETIVGDNVANLRQWLGEDPNRTKGEMVLIIEGKVKQETDEINPQALKALELISQSLPLKKAAAIVAEIYGYKKNALYQYGLEHFN</sequence>